<comment type="function">
    <text evidence="1">NDH-1 shuttles electrons from NADH, via FMN and iron-sulfur (Fe-S) centers, to quinones in the respiratory chain. The immediate electron acceptor for the enzyme in this species is believed to be a menaquinone. Couples the redox reaction to proton translocation (for every two electrons transferred, four hydrogen ions are translocated across the cytoplasmic membrane), and thus conserves the redox energy in a proton gradient.</text>
</comment>
<comment type="catalytic activity">
    <reaction evidence="1">
        <text>a quinone + NADH + 5 H(+)(in) = a quinol + NAD(+) + 4 H(+)(out)</text>
        <dbReference type="Rhea" id="RHEA:57888"/>
        <dbReference type="ChEBI" id="CHEBI:15378"/>
        <dbReference type="ChEBI" id="CHEBI:24646"/>
        <dbReference type="ChEBI" id="CHEBI:57540"/>
        <dbReference type="ChEBI" id="CHEBI:57945"/>
        <dbReference type="ChEBI" id="CHEBI:132124"/>
    </reaction>
</comment>
<comment type="subunit">
    <text evidence="1">NDH-1 is composed of 14 different subunits. Subunits NuoA, H, J, K, L, M, N constitute the membrane sector of the complex.</text>
</comment>
<comment type="subcellular location">
    <subcellularLocation>
        <location evidence="1">Cell membrane</location>
        <topology evidence="1">Multi-pass membrane protein</topology>
    </subcellularLocation>
</comment>
<comment type="similarity">
    <text evidence="1">Belongs to the complex I subunit 2 family.</text>
</comment>
<accession>A0LRJ4</accession>
<evidence type="ECO:0000255" key="1">
    <source>
        <dbReference type="HAMAP-Rule" id="MF_00445"/>
    </source>
</evidence>
<gene>
    <name evidence="1" type="primary">nuoN</name>
    <name type="ordered locus">Acel_0280</name>
</gene>
<keyword id="KW-1003">Cell membrane</keyword>
<keyword id="KW-0472">Membrane</keyword>
<keyword id="KW-0520">NAD</keyword>
<keyword id="KW-0874">Quinone</keyword>
<keyword id="KW-1185">Reference proteome</keyword>
<keyword id="KW-1278">Translocase</keyword>
<keyword id="KW-0812">Transmembrane</keyword>
<keyword id="KW-1133">Transmembrane helix</keyword>
<keyword id="KW-0813">Transport</keyword>
<organism>
    <name type="scientific">Acidothermus cellulolyticus (strain ATCC 43068 / DSM 8971 / 11B)</name>
    <dbReference type="NCBI Taxonomy" id="351607"/>
    <lineage>
        <taxon>Bacteria</taxon>
        <taxon>Bacillati</taxon>
        <taxon>Actinomycetota</taxon>
        <taxon>Actinomycetes</taxon>
        <taxon>Acidothermales</taxon>
        <taxon>Acidothermaceae</taxon>
        <taxon>Acidothermus</taxon>
    </lineage>
</organism>
<dbReference type="EC" id="7.1.1.-" evidence="1"/>
<dbReference type="EMBL" id="CP000481">
    <property type="protein sequence ID" value="ABK52054.1"/>
    <property type="molecule type" value="Genomic_DNA"/>
</dbReference>
<dbReference type="RefSeq" id="WP_011719117.1">
    <property type="nucleotide sequence ID" value="NC_008578.1"/>
</dbReference>
<dbReference type="SMR" id="A0LRJ4"/>
<dbReference type="FunCoup" id="A0LRJ4">
    <property type="interactions" value="79"/>
</dbReference>
<dbReference type="STRING" id="351607.Acel_0280"/>
<dbReference type="KEGG" id="ace:Acel_0280"/>
<dbReference type="eggNOG" id="COG1007">
    <property type="taxonomic scope" value="Bacteria"/>
</dbReference>
<dbReference type="HOGENOM" id="CLU_007100_1_1_11"/>
<dbReference type="InParanoid" id="A0LRJ4"/>
<dbReference type="OrthoDB" id="9811718at2"/>
<dbReference type="Proteomes" id="UP000008221">
    <property type="component" value="Chromosome"/>
</dbReference>
<dbReference type="GO" id="GO:0005886">
    <property type="term" value="C:plasma membrane"/>
    <property type="evidence" value="ECO:0007669"/>
    <property type="project" value="UniProtKB-SubCell"/>
</dbReference>
<dbReference type="GO" id="GO:0008137">
    <property type="term" value="F:NADH dehydrogenase (ubiquinone) activity"/>
    <property type="evidence" value="ECO:0007669"/>
    <property type="project" value="InterPro"/>
</dbReference>
<dbReference type="GO" id="GO:0050136">
    <property type="term" value="F:NADH:ubiquinone reductase (non-electrogenic) activity"/>
    <property type="evidence" value="ECO:0007669"/>
    <property type="project" value="UniProtKB-UniRule"/>
</dbReference>
<dbReference type="GO" id="GO:0048038">
    <property type="term" value="F:quinone binding"/>
    <property type="evidence" value="ECO:0007669"/>
    <property type="project" value="UniProtKB-KW"/>
</dbReference>
<dbReference type="GO" id="GO:0042773">
    <property type="term" value="P:ATP synthesis coupled electron transport"/>
    <property type="evidence" value="ECO:0007669"/>
    <property type="project" value="InterPro"/>
</dbReference>
<dbReference type="HAMAP" id="MF_00445">
    <property type="entry name" value="NDH1_NuoN_1"/>
    <property type="match status" value="1"/>
</dbReference>
<dbReference type="InterPro" id="IPR010096">
    <property type="entry name" value="NADH-Q_OxRdtase_suN/2"/>
</dbReference>
<dbReference type="InterPro" id="IPR001750">
    <property type="entry name" value="ND/Mrp_TM"/>
</dbReference>
<dbReference type="NCBIfam" id="TIGR01770">
    <property type="entry name" value="NDH_I_N"/>
    <property type="match status" value="1"/>
</dbReference>
<dbReference type="NCBIfam" id="NF004441">
    <property type="entry name" value="PRK05777.1-4"/>
    <property type="match status" value="1"/>
</dbReference>
<dbReference type="PANTHER" id="PTHR22773">
    <property type="entry name" value="NADH DEHYDROGENASE"/>
    <property type="match status" value="1"/>
</dbReference>
<dbReference type="Pfam" id="PF00361">
    <property type="entry name" value="Proton_antipo_M"/>
    <property type="match status" value="1"/>
</dbReference>
<feature type="chain" id="PRO_0000391089" description="NADH-quinone oxidoreductase subunit N">
    <location>
        <begin position="1"/>
        <end position="519"/>
    </location>
</feature>
<feature type="transmembrane region" description="Helical" evidence="1">
    <location>
        <begin position="22"/>
        <end position="42"/>
    </location>
</feature>
<feature type="transmembrane region" description="Helical" evidence="1">
    <location>
        <begin position="53"/>
        <end position="73"/>
    </location>
</feature>
<feature type="transmembrane region" description="Helical" evidence="1">
    <location>
        <begin position="87"/>
        <end position="107"/>
    </location>
</feature>
<feature type="transmembrane region" description="Helical" evidence="1">
    <location>
        <begin position="141"/>
        <end position="161"/>
    </location>
</feature>
<feature type="transmembrane region" description="Helical" evidence="1">
    <location>
        <begin position="163"/>
        <end position="183"/>
    </location>
</feature>
<feature type="transmembrane region" description="Helical" evidence="1">
    <location>
        <begin position="198"/>
        <end position="218"/>
    </location>
</feature>
<feature type="transmembrane region" description="Helical" evidence="1">
    <location>
        <begin position="242"/>
        <end position="262"/>
    </location>
</feature>
<feature type="transmembrane region" description="Helical" evidence="1">
    <location>
        <begin position="287"/>
        <end position="307"/>
    </location>
</feature>
<feature type="transmembrane region" description="Helical" evidence="1">
    <location>
        <begin position="310"/>
        <end position="330"/>
    </location>
</feature>
<feature type="transmembrane region" description="Helical" evidence="1">
    <location>
        <begin position="336"/>
        <end position="356"/>
    </location>
</feature>
<feature type="transmembrane region" description="Helical" evidence="1">
    <location>
        <begin position="363"/>
        <end position="383"/>
    </location>
</feature>
<feature type="transmembrane region" description="Helical" evidence="1">
    <location>
        <begin position="406"/>
        <end position="426"/>
    </location>
</feature>
<feature type="transmembrane region" description="Helical" evidence="1">
    <location>
        <begin position="442"/>
        <end position="461"/>
    </location>
</feature>
<feature type="transmembrane region" description="Helical" evidence="1">
    <location>
        <begin position="483"/>
        <end position="503"/>
    </location>
</feature>
<name>NUON_ACIC1</name>
<reference key="1">
    <citation type="journal article" date="2009" name="Genome Res.">
        <title>Complete genome of the cellulolytic thermophile Acidothermus cellulolyticus 11B provides insights into its ecophysiological and evolutionary adaptations.</title>
        <authorList>
            <person name="Barabote R.D."/>
            <person name="Xie G."/>
            <person name="Leu D.H."/>
            <person name="Normand P."/>
            <person name="Necsulea A."/>
            <person name="Daubin V."/>
            <person name="Medigue C."/>
            <person name="Adney W.S."/>
            <person name="Xu X.C."/>
            <person name="Lapidus A."/>
            <person name="Parales R.E."/>
            <person name="Detter C."/>
            <person name="Pujic P."/>
            <person name="Bruce D."/>
            <person name="Lavire C."/>
            <person name="Challacombe J.F."/>
            <person name="Brettin T.S."/>
            <person name="Berry A.M."/>
        </authorList>
    </citation>
    <scope>NUCLEOTIDE SEQUENCE [LARGE SCALE GENOMIC DNA]</scope>
    <source>
        <strain>ATCC 43068 / DSM 8971 / 11B</strain>
    </source>
</reference>
<sequence length="519" mass="54151">MSFYAAANPNAIPAPHIEYRALLPMLIVFGVACAGVLVEAFVPRAQRALTQTVLALGGLVAALIAVVSNTGLPRKLVAQSAIAADGPTLFIQGTILALSIGALLLIADRSIGADSDFVAQAADLPGSEQERASVQAGLRQTEVFPLAMFAVGGMMLFPAANDLITAFVALEVLSLPLYLLAGMARRRRLLSQEAAVKYFLLGAFSSAFFVYGLALVYGYAKSVEYGDIATALTASDRGDSLIIVGLALIGISLLFKLSGVPFHWWTPDVYQGAPTPITAFMAAGTKVAAFGALLRVFFVAFGGLAWDWRPVIWGVAIATMVVGAILGITQTDVKRLLAYSSIAHAGFVLTAFAATTRASESSVLFYLVAYGFMTIGAFAIVILVRDGDGEANHLSRWVGLGRRSPLVAGIFALFLLAMAGLPPTSGLWAKVAVFTAAYQGGAGPLVIVGVLASAVTAYYYLRIIVLMFAQEPAVEGPTVAVPGALASAAIALGVIVTVVLGIVPQPVLDLADKAVPFLR</sequence>
<protein>
    <recommendedName>
        <fullName evidence="1">NADH-quinone oxidoreductase subunit N</fullName>
        <ecNumber evidence="1">7.1.1.-</ecNumber>
    </recommendedName>
    <alternativeName>
        <fullName evidence="1">NADH dehydrogenase I subunit N</fullName>
    </alternativeName>
    <alternativeName>
        <fullName evidence="1">NDH-1 subunit N</fullName>
    </alternativeName>
</protein>
<proteinExistence type="inferred from homology"/>